<evidence type="ECO:0000250" key="1">
    <source>
        <dbReference type="UniProtKB" id="P38174"/>
    </source>
</evidence>
<evidence type="ECO:0000255" key="2">
    <source>
        <dbReference type="HAMAP-Rule" id="MF_03175"/>
    </source>
</evidence>
<evidence type="ECO:0000256" key="3">
    <source>
        <dbReference type="SAM" id="MobiDB-lite"/>
    </source>
</evidence>
<proteinExistence type="inferred from homology"/>
<reference key="1">
    <citation type="journal article" date="2008" name="FEMS Yeast Res.">
        <title>Comparative genome analysis of a Saccharomyces cerevisiae wine strain.</title>
        <authorList>
            <person name="Borneman A.R."/>
            <person name="Forgan A.H."/>
            <person name="Pretorius I.S."/>
            <person name="Chambers P.J."/>
        </authorList>
    </citation>
    <scope>NUCLEOTIDE SEQUENCE [LARGE SCALE GENOMIC DNA]</scope>
    <source>
        <strain>AWRI1631</strain>
    </source>
</reference>
<protein>
    <recommendedName>
        <fullName evidence="2">Methionine aminopeptidase 2</fullName>
        <shortName evidence="2">MAP 2</shortName>
        <shortName evidence="2">MetAP 2</shortName>
        <ecNumber evidence="2">3.4.11.18</ecNumber>
    </recommendedName>
    <alternativeName>
        <fullName evidence="2">Peptidase M</fullName>
    </alternativeName>
</protein>
<dbReference type="EC" id="3.4.11.18" evidence="2"/>
<dbReference type="EMBL" id="ABSV01000050">
    <property type="protein sequence ID" value="EDZ73942.1"/>
    <property type="molecule type" value="Genomic_DNA"/>
</dbReference>
<dbReference type="SMR" id="B5VDQ0"/>
<dbReference type="Proteomes" id="UP000008988">
    <property type="component" value="Unassembled WGS sequence"/>
</dbReference>
<dbReference type="GO" id="GO:0005737">
    <property type="term" value="C:cytoplasm"/>
    <property type="evidence" value="ECO:0007669"/>
    <property type="project" value="UniProtKB-SubCell"/>
</dbReference>
<dbReference type="GO" id="GO:0004239">
    <property type="term" value="F:initiator methionyl aminopeptidase activity"/>
    <property type="evidence" value="ECO:0007669"/>
    <property type="project" value="UniProtKB-UniRule"/>
</dbReference>
<dbReference type="GO" id="GO:0046872">
    <property type="term" value="F:metal ion binding"/>
    <property type="evidence" value="ECO:0007669"/>
    <property type="project" value="UniProtKB-UniRule"/>
</dbReference>
<dbReference type="GO" id="GO:0070006">
    <property type="term" value="F:metalloaminopeptidase activity"/>
    <property type="evidence" value="ECO:0007669"/>
    <property type="project" value="UniProtKB-UniRule"/>
</dbReference>
<dbReference type="GO" id="GO:0006508">
    <property type="term" value="P:proteolysis"/>
    <property type="evidence" value="ECO:0007669"/>
    <property type="project" value="UniProtKB-KW"/>
</dbReference>
<dbReference type="CDD" id="cd01088">
    <property type="entry name" value="MetAP2"/>
    <property type="match status" value="1"/>
</dbReference>
<dbReference type="FunFam" id="1.10.10.10:FF:000370">
    <property type="entry name" value="Methionine aminopeptidase 2"/>
    <property type="match status" value="1"/>
</dbReference>
<dbReference type="Gene3D" id="3.90.230.10">
    <property type="entry name" value="Creatinase/methionine aminopeptidase superfamily"/>
    <property type="match status" value="1"/>
</dbReference>
<dbReference type="Gene3D" id="1.10.10.10">
    <property type="entry name" value="Winged helix-like DNA-binding domain superfamily/Winged helix DNA-binding domain"/>
    <property type="match status" value="1"/>
</dbReference>
<dbReference type="HAMAP" id="MF_03175">
    <property type="entry name" value="MetAP_2_euk"/>
    <property type="match status" value="1"/>
</dbReference>
<dbReference type="InterPro" id="IPR036005">
    <property type="entry name" value="Creatinase/aminopeptidase-like"/>
</dbReference>
<dbReference type="InterPro" id="IPR050247">
    <property type="entry name" value="Met_Aminopeptidase_Type2"/>
</dbReference>
<dbReference type="InterPro" id="IPR000994">
    <property type="entry name" value="Pept_M24"/>
</dbReference>
<dbReference type="InterPro" id="IPR001714">
    <property type="entry name" value="Pept_M24_MAP"/>
</dbReference>
<dbReference type="InterPro" id="IPR002468">
    <property type="entry name" value="Pept_M24A_MAP2"/>
</dbReference>
<dbReference type="InterPro" id="IPR018349">
    <property type="entry name" value="Pept_M24A_MAP2_BS"/>
</dbReference>
<dbReference type="InterPro" id="IPR036388">
    <property type="entry name" value="WH-like_DNA-bd_sf"/>
</dbReference>
<dbReference type="InterPro" id="IPR036390">
    <property type="entry name" value="WH_DNA-bd_sf"/>
</dbReference>
<dbReference type="NCBIfam" id="TIGR00501">
    <property type="entry name" value="met_pdase_II"/>
    <property type="match status" value="1"/>
</dbReference>
<dbReference type="PANTHER" id="PTHR45777">
    <property type="entry name" value="METHIONINE AMINOPEPTIDASE 2"/>
    <property type="match status" value="1"/>
</dbReference>
<dbReference type="PANTHER" id="PTHR45777:SF2">
    <property type="entry name" value="METHIONINE AMINOPEPTIDASE 2"/>
    <property type="match status" value="1"/>
</dbReference>
<dbReference type="Pfam" id="PF00557">
    <property type="entry name" value="Peptidase_M24"/>
    <property type="match status" value="1"/>
</dbReference>
<dbReference type="PRINTS" id="PR00599">
    <property type="entry name" value="MAPEPTIDASE"/>
</dbReference>
<dbReference type="SUPFAM" id="SSF55920">
    <property type="entry name" value="Creatinase/aminopeptidase"/>
    <property type="match status" value="1"/>
</dbReference>
<dbReference type="SUPFAM" id="SSF46785">
    <property type="entry name" value="Winged helix' DNA-binding domain"/>
    <property type="match status" value="1"/>
</dbReference>
<dbReference type="PROSITE" id="PS01202">
    <property type="entry name" value="MAP_2"/>
    <property type="match status" value="1"/>
</dbReference>
<sequence>MTDAEIENSPASDLKELNLENEGVEQQDQAKADESDPVESKKKKNKKKKKKKSNVKKIELLFPDGKYPEGAWMDYHQDFNLQRTTDEESRYLKRDLERAEHWNDVRKGAEIHRRVRRAIKDRIVPGMKLMDIADMIENTTRKYTGAENLLAMEDPKSQGIGFPTGLSLNHCAAHFTPNAGDKTVLKYEDVMKVDYGVQVNGNIIDSAFTVSFDPQYDNLLAAVKDATYTGIKEAGIDVRLTDIGEAIQEVMESYEVEINGETYQVKPCRNLCGHSIAPYRIHGGKSVPIVKNGDTTKMEEGEHFAIETFGSTGRGYVTAGGEVSHYARSAEDHQVMPTLDSAKNLLKTIDRNFGTLPFCRRYLDRLGQEKYLFALNNLVRHGLVQDYPPLNDIPGSYTAQFEHTILLHAHKKEVVSKGDDY</sequence>
<accession>B5VDQ0</accession>
<comment type="function">
    <text evidence="2">Cotranslationally removes the N-terminal methionine from nascent proteins. The N-terminal methionine is often cleaved when the second residue in the primary sequence is small and uncharged (Met-Ala-, Cys, Gly, Pro, Ser, Thr, or Val).</text>
</comment>
<comment type="catalytic activity">
    <reaction evidence="2">
        <text>Release of N-terminal amino acids, preferentially methionine, from peptides and arylamides.</text>
        <dbReference type="EC" id="3.4.11.18"/>
    </reaction>
</comment>
<comment type="cofactor">
    <cofactor evidence="2">
        <name>Co(2+)</name>
        <dbReference type="ChEBI" id="CHEBI:48828"/>
    </cofactor>
    <cofactor evidence="2">
        <name>Zn(2+)</name>
        <dbReference type="ChEBI" id="CHEBI:29105"/>
    </cofactor>
    <cofactor evidence="2">
        <name>Mn(2+)</name>
        <dbReference type="ChEBI" id="CHEBI:29035"/>
    </cofactor>
    <cofactor evidence="2">
        <name>Fe(2+)</name>
        <dbReference type="ChEBI" id="CHEBI:29033"/>
    </cofactor>
    <text evidence="2">Binds 2 divalent metal cations per subunit. Has a high-affinity and a low affinity metal-binding site. The true nature of the physiological cofactor is under debate. The enzyme is active with cobalt, zinc, manganese or divalent iron ions. Most likely, methionine aminopeptidases function as mononuclear Fe(2+)-metalloproteases under physiological conditions, and the catalytically relevant metal-binding site has been assigned to the histidine-containing high-affinity site.</text>
</comment>
<comment type="subcellular location">
    <subcellularLocation>
        <location evidence="2">Cytoplasm</location>
    </subcellularLocation>
</comment>
<comment type="similarity">
    <text evidence="2">Belongs to the peptidase M24A family. Methionine aminopeptidase eukaryotic type 2 subfamily.</text>
</comment>
<gene>
    <name evidence="2" type="primary">MAP2</name>
    <name type="ORF">AWRI1631_20130</name>
</gene>
<name>MAP2_YEAS6</name>
<organism>
    <name type="scientific">Saccharomyces cerevisiae (strain AWRI1631)</name>
    <name type="common">Baker's yeast</name>
    <dbReference type="NCBI Taxonomy" id="545124"/>
    <lineage>
        <taxon>Eukaryota</taxon>
        <taxon>Fungi</taxon>
        <taxon>Dikarya</taxon>
        <taxon>Ascomycota</taxon>
        <taxon>Saccharomycotina</taxon>
        <taxon>Saccharomycetes</taxon>
        <taxon>Saccharomycetales</taxon>
        <taxon>Saccharomycetaceae</taxon>
        <taxon>Saccharomyces</taxon>
    </lineage>
</organism>
<keyword id="KW-0031">Aminopeptidase</keyword>
<keyword id="KW-0963">Cytoplasm</keyword>
<keyword id="KW-0378">Hydrolase</keyword>
<keyword id="KW-0479">Metal-binding</keyword>
<keyword id="KW-0597">Phosphoprotein</keyword>
<keyword id="KW-0645">Protease</keyword>
<feature type="chain" id="PRO_0000407674" description="Methionine aminopeptidase 2">
    <location>
        <begin position="1"/>
        <end position="421"/>
    </location>
</feature>
<feature type="region of interest" description="Disordered" evidence="3">
    <location>
        <begin position="1"/>
        <end position="53"/>
    </location>
</feature>
<feature type="compositionally biased region" description="Basic and acidic residues" evidence="3">
    <location>
        <begin position="28"/>
        <end position="40"/>
    </location>
</feature>
<feature type="compositionally biased region" description="Basic residues" evidence="3">
    <location>
        <begin position="41"/>
        <end position="53"/>
    </location>
</feature>
<feature type="binding site" evidence="2">
    <location>
        <position position="174"/>
    </location>
    <ligand>
        <name>substrate</name>
    </ligand>
</feature>
<feature type="binding site" evidence="2">
    <location>
        <position position="194"/>
    </location>
    <ligand>
        <name>a divalent metal cation</name>
        <dbReference type="ChEBI" id="CHEBI:60240"/>
        <label>1</label>
    </ligand>
</feature>
<feature type="binding site" evidence="2">
    <location>
        <position position="205"/>
    </location>
    <ligand>
        <name>a divalent metal cation</name>
        <dbReference type="ChEBI" id="CHEBI:60240"/>
        <label>1</label>
    </ligand>
</feature>
<feature type="binding site" evidence="2">
    <location>
        <position position="205"/>
    </location>
    <ligand>
        <name>a divalent metal cation</name>
        <dbReference type="ChEBI" id="CHEBI:60240"/>
        <label>2</label>
        <note>catalytic</note>
    </ligand>
</feature>
<feature type="binding site" evidence="2">
    <location>
        <position position="274"/>
    </location>
    <ligand>
        <name>a divalent metal cation</name>
        <dbReference type="ChEBI" id="CHEBI:60240"/>
        <label>2</label>
        <note>catalytic</note>
    </ligand>
</feature>
<feature type="binding site" evidence="2">
    <location>
        <position position="282"/>
    </location>
    <ligand>
        <name>substrate</name>
    </ligand>
</feature>
<feature type="binding site" evidence="2">
    <location>
        <position position="307"/>
    </location>
    <ligand>
        <name>a divalent metal cation</name>
        <dbReference type="ChEBI" id="CHEBI:60240"/>
        <label>2</label>
        <note>catalytic</note>
    </ligand>
</feature>
<feature type="binding site" evidence="2">
    <location>
        <position position="402"/>
    </location>
    <ligand>
        <name>a divalent metal cation</name>
        <dbReference type="ChEBI" id="CHEBI:60240"/>
        <label>1</label>
    </ligand>
</feature>
<feature type="binding site" evidence="2">
    <location>
        <position position="402"/>
    </location>
    <ligand>
        <name>a divalent metal cation</name>
        <dbReference type="ChEBI" id="CHEBI:60240"/>
        <label>2</label>
        <note>catalytic</note>
    </ligand>
</feature>
<feature type="modified residue" description="Phosphoserine" evidence="1">
    <location>
        <position position="35"/>
    </location>
</feature>